<organism>
    <name type="scientific">Solanum lycopersicum</name>
    <name type="common">Tomato</name>
    <name type="synonym">Lycopersicon esculentum</name>
    <dbReference type="NCBI Taxonomy" id="4081"/>
    <lineage>
        <taxon>Eukaryota</taxon>
        <taxon>Viridiplantae</taxon>
        <taxon>Streptophyta</taxon>
        <taxon>Embryophyta</taxon>
        <taxon>Tracheophyta</taxon>
        <taxon>Spermatophyta</taxon>
        <taxon>Magnoliopsida</taxon>
        <taxon>eudicotyledons</taxon>
        <taxon>Gunneridae</taxon>
        <taxon>Pentapetalae</taxon>
        <taxon>asterids</taxon>
        <taxon>lamiids</taxon>
        <taxon>Solanales</taxon>
        <taxon>Solanaceae</taxon>
        <taxon>Solanoideae</taxon>
        <taxon>Solaneae</taxon>
        <taxon>Solanum</taxon>
        <taxon>Solanum subgen. Lycopersicon</taxon>
    </lineage>
</organism>
<reference key="1">
    <citation type="submission" date="1996-03" db="EMBL/GenBank/DDBJ databases">
        <authorList>
            <person name="Rose A."/>
        </authorList>
    </citation>
    <scope>NUCLEOTIDE SEQUENCE [MRNA]</scope>
    <source>
        <strain>cv. Rutgers</strain>
    </source>
</reference>
<reference key="2">
    <citation type="submission" date="1996-06" db="EMBL/GenBank/DDBJ databases">
        <authorList>
            <person name="John I."/>
            <person name="Hackett R."/>
            <person name="Cooper W."/>
            <person name="Drake R."/>
            <person name="Farrell A."/>
            <person name="Grierson D."/>
        </authorList>
    </citation>
    <scope>NUCLEOTIDE SEQUENCE [MRNA] OF 9-138</scope>
    <source>
        <strain>cv. Ailsa Craig</strain>
        <tissue>Leaf</tissue>
    </source>
</reference>
<dbReference type="EMBL" id="X95987">
    <property type="protein sequence ID" value="CAA65231.1"/>
    <property type="molecule type" value="mRNA"/>
</dbReference>
<dbReference type="EMBL" id="Z75521">
    <property type="protein sequence ID" value="CAA99757.1"/>
    <property type="molecule type" value="mRNA"/>
</dbReference>
<dbReference type="RefSeq" id="NP_001234042.1">
    <property type="nucleotide sequence ID" value="NM_001247113.3"/>
</dbReference>
<dbReference type="SMR" id="Q40163"/>
<dbReference type="FunCoup" id="Q40163">
    <property type="interactions" value="1263"/>
</dbReference>
<dbReference type="STRING" id="4081.Q40163"/>
<dbReference type="PaxDb" id="4081-Solyc07g066310.2.1"/>
<dbReference type="EnsemblPlants" id="Solyc07g066310.3.1">
    <property type="protein sequence ID" value="Solyc07g066310.3.1"/>
    <property type="gene ID" value="Solyc07g066310.3"/>
</dbReference>
<dbReference type="GeneID" id="778297"/>
<dbReference type="Gramene" id="Solyc07g066310.3.1">
    <property type="protein sequence ID" value="Solyc07g066310.3.1"/>
    <property type="gene ID" value="Solyc07g066310.3"/>
</dbReference>
<dbReference type="KEGG" id="sly:778297"/>
<dbReference type="eggNOG" id="ENOG502RZG6">
    <property type="taxonomic scope" value="Eukaryota"/>
</dbReference>
<dbReference type="HOGENOM" id="CLU_150952_1_0_1"/>
<dbReference type="InParanoid" id="Q40163"/>
<dbReference type="OMA" id="IYNRDEW"/>
<dbReference type="OrthoDB" id="496093at2759"/>
<dbReference type="PhylomeDB" id="Q40163"/>
<dbReference type="Proteomes" id="UP000004994">
    <property type="component" value="Chromosome 7"/>
</dbReference>
<dbReference type="GO" id="GO:0009535">
    <property type="term" value="C:chloroplast thylakoid membrane"/>
    <property type="evidence" value="ECO:0007669"/>
    <property type="project" value="UniProtKB-SubCell"/>
</dbReference>
<dbReference type="GO" id="GO:0009654">
    <property type="term" value="C:photosystem II oxygen evolving complex"/>
    <property type="evidence" value="ECO:0007669"/>
    <property type="project" value="InterPro"/>
</dbReference>
<dbReference type="GO" id="GO:0015979">
    <property type="term" value="P:photosynthesis"/>
    <property type="evidence" value="ECO:0007669"/>
    <property type="project" value="UniProtKB-KW"/>
</dbReference>
<dbReference type="InterPro" id="IPR006814">
    <property type="entry name" value="PSII_PsbR"/>
</dbReference>
<dbReference type="PANTHER" id="PTHR34369">
    <property type="entry name" value="PHOTOSYSTEM II 10 KDA POLYPEPTIDE, CHLOROPLASTIC"/>
    <property type="match status" value="1"/>
</dbReference>
<dbReference type="PANTHER" id="PTHR34369:SF2">
    <property type="entry name" value="PHOTOSYSTEM II 10 KDA POLYPEPTIDE, CHLOROPLASTIC"/>
    <property type="match status" value="1"/>
</dbReference>
<dbReference type="Pfam" id="PF04725">
    <property type="entry name" value="PsbR"/>
    <property type="match status" value="1"/>
</dbReference>
<comment type="function">
    <text>Associated with the oxygen-evolving complex of photosystem II.</text>
</comment>
<comment type="subcellular location">
    <subcellularLocation>
        <location>Plastid</location>
        <location>Chloroplast thylakoid membrane</location>
    </subcellularLocation>
    <text>Associated with the photosystem II complex.</text>
</comment>
<comment type="similarity">
    <text evidence="2">Belongs to the psbR family.</text>
</comment>
<name>PSBR_SOLLC</name>
<keyword id="KW-0150">Chloroplast</keyword>
<keyword id="KW-0472">Membrane</keyword>
<keyword id="KW-0602">Photosynthesis</keyword>
<keyword id="KW-0604">Photosystem II</keyword>
<keyword id="KW-0934">Plastid</keyword>
<keyword id="KW-1185">Reference proteome</keyword>
<keyword id="KW-0793">Thylakoid</keyword>
<keyword id="KW-0809">Transit peptide</keyword>
<accession>Q40163</accession>
<accession>Q43518</accession>
<sequence>MASTVMSSLSLKPTFTLEKISVKGLPSLTRSSSSFKVVASGVKKLKTDKPYGINGSMALRDGVDASGRKPKGKGVYQYVDKYGANVDGYSPIYNTDEWSPSGDVYVGGTTGLAIWAVTLLGILAGGALLVYNTSALAQ</sequence>
<feature type="transit peptide" description="Chloroplast" evidence="1">
    <location>
        <begin position="1"/>
        <end position="39"/>
    </location>
</feature>
<feature type="chain" id="PRO_0000029363" description="Photosystem II 10 kDa polypeptide, chloroplastic">
    <location>
        <begin position="40"/>
        <end position="138"/>
    </location>
</feature>
<feature type="sequence conflict" description="In Ref. 2; CAA99757." evidence="2" ref="2">
    <original>S</original>
    <variation>R</variation>
    <location>
        <position position="40"/>
    </location>
</feature>
<proteinExistence type="evidence at transcript level"/>
<gene>
    <name type="primary">PSBR</name>
</gene>
<protein>
    <recommendedName>
        <fullName>Photosystem II 10 kDa polypeptide, chloroplastic</fullName>
    </recommendedName>
</protein>
<evidence type="ECO:0000250" key="1"/>
<evidence type="ECO:0000305" key="2"/>